<keyword id="KW-0194">Cyanelle</keyword>
<keyword id="KW-0934">Plastid</keyword>
<keyword id="KW-0687">Ribonucleoprotein</keyword>
<keyword id="KW-0689">Ribosomal protein</keyword>
<keyword id="KW-0694">RNA-binding</keyword>
<keyword id="KW-0699">rRNA-binding</keyword>
<proteinExistence type="inferred from homology"/>
<evidence type="ECO:0000250" key="1"/>
<evidence type="ECO:0000305" key="2"/>
<protein>
    <recommendedName>
        <fullName evidence="2">Small ribosomal subunit protein uS7c</fullName>
    </recommendedName>
    <alternativeName>
        <fullName>30S ribosomal protein S7, cyanelle</fullName>
    </alternativeName>
</protein>
<geneLocation type="cyanelle"/>
<dbReference type="EMBL" id="X52497">
    <property type="protein sequence ID" value="CAA36739.1"/>
    <property type="molecule type" value="Genomic_DNA"/>
</dbReference>
<dbReference type="EMBL" id="U30821">
    <property type="protein sequence ID" value="AAA81239.1"/>
    <property type="molecule type" value="Genomic_DNA"/>
</dbReference>
<dbReference type="PIR" id="S14714">
    <property type="entry name" value="R3KT7"/>
</dbReference>
<dbReference type="RefSeq" id="NP_043208.1">
    <property type="nucleotide sequence ID" value="NC_001675.1"/>
</dbReference>
<dbReference type="SMR" id="P17292"/>
<dbReference type="GeneID" id="801686"/>
<dbReference type="GO" id="GO:0009842">
    <property type="term" value="C:cyanelle"/>
    <property type="evidence" value="ECO:0007669"/>
    <property type="project" value="UniProtKB-SubCell"/>
</dbReference>
<dbReference type="GO" id="GO:0015935">
    <property type="term" value="C:small ribosomal subunit"/>
    <property type="evidence" value="ECO:0007669"/>
    <property type="project" value="InterPro"/>
</dbReference>
<dbReference type="GO" id="GO:0019843">
    <property type="term" value="F:rRNA binding"/>
    <property type="evidence" value="ECO:0007669"/>
    <property type="project" value="UniProtKB-KW"/>
</dbReference>
<dbReference type="GO" id="GO:0003735">
    <property type="term" value="F:structural constituent of ribosome"/>
    <property type="evidence" value="ECO:0007669"/>
    <property type="project" value="InterPro"/>
</dbReference>
<dbReference type="GO" id="GO:0006412">
    <property type="term" value="P:translation"/>
    <property type="evidence" value="ECO:0007669"/>
    <property type="project" value="InterPro"/>
</dbReference>
<dbReference type="CDD" id="cd14871">
    <property type="entry name" value="uS7_Chloroplast"/>
    <property type="match status" value="1"/>
</dbReference>
<dbReference type="FunFam" id="1.10.455.10:FF:000001">
    <property type="entry name" value="30S ribosomal protein S7"/>
    <property type="match status" value="1"/>
</dbReference>
<dbReference type="Gene3D" id="1.10.455.10">
    <property type="entry name" value="Ribosomal protein S7 domain"/>
    <property type="match status" value="1"/>
</dbReference>
<dbReference type="HAMAP" id="MF_00480_B">
    <property type="entry name" value="Ribosomal_uS7_B"/>
    <property type="match status" value="1"/>
</dbReference>
<dbReference type="InterPro" id="IPR000235">
    <property type="entry name" value="Ribosomal_uS7"/>
</dbReference>
<dbReference type="InterPro" id="IPR005717">
    <property type="entry name" value="Ribosomal_uS7_bac/org-type"/>
</dbReference>
<dbReference type="InterPro" id="IPR020606">
    <property type="entry name" value="Ribosomal_uS7_CS"/>
</dbReference>
<dbReference type="InterPro" id="IPR023798">
    <property type="entry name" value="Ribosomal_uS7_dom"/>
</dbReference>
<dbReference type="InterPro" id="IPR036823">
    <property type="entry name" value="Ribosomal_uS7_dom_sf"/>
</dbReference>
<dbReference type="NCBIfam" id="TIGR01029">
    <property type="entry name" value="rpsG_bact"/>
    <property type="match status" value="1"/>
</dbReference>
<dbReference type="PANTHER" id="PTHR11205">
    <property type="entry name" value="RIBOSOMAL PROTEIN S7"/>
    <property type="match status" value="1"/>
</dbReference>
<dbReference type="Pfam" id="PF00177">
    <property type="entry name" value="Ribosomal_S7"/>
    <property type="match status" value="1"/>
</dbReference>
<dbReference type="PIRSF" id="PIRSF002122">
    <property type="entry name" value="RPS7p_RPS7a_RPS5e_RPS7o"/>
    <property type="match status" value="1"/>
</dbReference>
<dbReference type="SUPFAM" id="SSF47973">
    <property type="entry name" value="Ribosomal protein S7"/>
    <property type="match status" value="1"/>
</dbReference>
<dbReference type="PROSITE" id="PS00052">
    <property type="entry name" value="RIBOSOMAL_S7"/>
    <property type="match status" value="1"/>
</dbReference>
<comment type="function">
    <text evidence="1">One of the primary rRNA binding proteins, it binds directly to 16S rRNA where it nucleates assembly of the head domain of the 30S subunit.</text>
</comment>
<comment type="subunit">
    <text>Part of the 30S ribosomal subunit.</text>
</comment>
<comment type="subcellular location">
    <subcellularLocation>
        <location>Plastid</location>
        <location>Cyanelle</location>
    </subcellularLocation>
</comment>
<comment type="similarity">
    <text evidence="2">Belongs to the universal ribosomal protein uS7 family.</text>
</comment>
<gene>
    <name type="primary">rps7</name>
</gene>
<sequence length="156" mass="17763">MSRRSTAKKRLILPDPIYNSRLVTLLINHMLKDGKKSIARSFIYEALKIIEEKKGSDPLEVLEQAVRNSTPLIEVKARRIGGSTYQVPMEVRVDRGITLALRVVNSFSLQRLGKTIAVKLANELIDAANETGNTIKKREEMHRMAEANKAFVHYRY</sequence>
<organism>
    <name type="scientific">Cyanophora paradoxa</name>
    <dbReference type="NCBI Taxonomy" id="2762"/>
    <lineage>
        <taxon>Eukaryota</taxon>
        <taxon>Glaucocystophyceae</taxon>
        <taxon>Cyanophoraceae</taxon>
        <taxon>Cyanophora</taxon>
    </lineage>
</organism>
<reference key="1">
    <citation type="journal article" date="1990" name="Plant Mol. Biol.">
        <title>The cyanelle str operon from Cyanophora paradoxa: sequence analysis and phylogenetic implications.</title>
        <authorList>
            <person name="Kraus M."/>
            <person name="Goetz M."/>
            <person name="Loeffelhardt W."/>
        </authorList>
    </citation>
    <scope>NUCLEOTIDE SEQUENCE [GENOMIC DNA]</scope>
    <source>
        <strain>UTEX LB 555 / Pringsheim</strain>
    </source>
</reference>
<reference key="2">
    <citation type="journal article" date="1995" name="Plant Mol. Biol. Rep.">
        <title>Nucleotide sequence of the cyanelle DNA from Cyanophora paradoxa.</title>
        <authorList>
            <person name="Stirewalt V.L."/>
            <person name="Michalowski C.B."/>
            <person name="Loeffelhardt W."/>
            <person name="Bohnert H.J."/>
            <person name="Bryant D.A."/>
        </authorList>
    </citation>
    <scope>NUCLEOTIDE SEQUENCE [LARGE SCALE GENOMIC DNA]</scope>
    <source>
        <strain>UTEX LB 555 / Pringsheim</strain>
    </source>
</reference>
<reference key="3">
    <citation type="book" date="1997" name="Eukaryotism and symbiosis">
        <title>The complete sequence of the cyanelle genome of Cyanophora paradoxa: the genetic complexity of a primitive plastid.</title>
        <editorList>
            <person name="Schenk H.E.A."/>
            <person name="Herrmann R."/>
            <person name="Jeon K.W."/>
            <person name="Mueller N.E."/>
            <person name="Schwemmler W."/>
        </editorList>
        <authorList>
            <person name="Loeffelhardt W."/>
            <person name="Stirewalt V.L."/>
            <person name="Michalowski C.B."/>
            <person name="Annarella M."/>
            <person name="Farley J.Y."/>
            <person name="Schluchter W.M."/>
            <person name="Chung S."/>
            <person name="Newmann-Spallart C."/>
            <person name="Steiner J.M."/>
            <person name="Jakowitsch J."/>
            <person name="Bohnert H.J."/>
            <person name="Bryant D.A."/>
        </authorList>
    </citation>
    <scope>NUCLEOTIDE SEQUENCE [LARGE SCALE GENOMIC DNA]</scope>
    <source>
        <strain>UTEX LB 555 / Pringsheim</strain>
    </source>
</reference>
<name>RR7_CYAPA</name>
<accession>P17292</accession>
<feature type="chain" id="PRO_0000124418" description="Small ribosomal subunit protein uS7c">
    <location>
        <begin position="1"/>
        <end position="156"/>
    </location>
</feature>